<accession>A4PBP7</accession>
<sequence length="725" mass="79762">MSKGMETVTSLVSGPPNNLKKGGNRNVPVAGISGTIRPYSSIVSGSSASGSAPVRVSAPGPQAVRPVSRPFTAPHTLHFSKGCWNIVTFNSSDAETNRLVDLCITDVIKDHALTAKVDNMRFELDENDLKKLSAPVREKLSNIGIIDPANSDSAELSGLVVVKTKLDSVIYPNTMFLPGGVGFLASLPDVSGYFAEVLERMPVQTLNSSLYYERTWIDGMFEKFGKNFASNEHGKRNKTLTSVLRDITTLADQGVTVACPIHSDVMLRSLSPSDPVYYAKGDQGCFKSHRMVFTKAPVSKCGICSTLKMALASSMNVDWRSQVNIHPARLMSTAYRYVATVAIAHYGKNRLAESNIRSTDHATVVNMIVDMVSKSTELTALGVTVANVNVRSRYRRAIMIPVGESYHICVTAITTLLARCFGELNEWGYLGVDLISQNGRVQIRTGLDVVNCSLVAGVPVTKKWNTASTMDNILEMKTITYPIYNDAVVETFETLLAQQFEREINAAVARDDCVNIKKNGEDERYNFKAKSPEIIYRSIRQMVKAGTSMTKMMGEAIERLVSSERTEGMRSVNSIAISIIVKMRMEKSKDKSKTQITSGEEKKLPPLFLITPQYEINLAEIRKAVERSSKDFVPIKMEKTAEETSKDIENHVLKSLNAQASMSWADEVEMFDNEENQKQELDAKSDDVEESSVEGEEDDDGSSASEETDTYSNDNAAAASPTKDE</sequence>
<organism>
    <name type="scientific">Rice gall dwarf virus</name>
    <name type="common">RGDV</name>
    <dbReference type="NCBI Taxonomy" id="10986"/>
    <lineage>
        <taxon>Viruses</taxon>
        <taxon>Riboviria</taxon>
        <taxon>Orthornavirae</taxon>
        <taxon>Duplornaviricota</taxon>
        <taxon>Resentoviricetes</taxon>
        <taxon>Reovirales</taxon>
        <taxon>Sedoreoviridae</taxon>
        <taxon>Phytoreovirus</taxon>
    </lineage>
</organism>
<dbReference type="EMBL" id="AB254452">
    <property type="protein sequence ID" value="BAF49640.1"/>
    <property type="molecule type" value="Genomic_RNA"/>
</dbReference>
<dbReference type="RefSeq" id="YP_001111374.1">
    <property type="nucleotide sequence ID" value="NC_009249.1"/>
</dbReference>
<dbReference type="GeneID" id="4955112"/>
<dbReference type="KEGG" id="vg:4955112"/>
<dbReference type="OrthoDB" id="32719at10239"/>
<dbReference type="Proteomes" id="UP000006720">
    <property type="component" value="Genome"/>
</dbReference>
<protein>
    <recommendedName>
        <fullName>Non-structural protein 4</fullName>
        <shortName>Pns4</shortName>
    </recommendedName>
</protein>
<reference key="1">
    <citation type="journal article" date="2007" name="Arch. Virol.">
        <title>Molecular analysis of the genome segments S1, S4, S6, S7 and S12 of a Rice gall dwarf virus isolate from Thailand; completion of the genomic sequence.</title>
        <authorList>
            <person name="Moriyasu Y."/>
            <person name="Maruyama-Funatsuki W."/>
            <person name="Kikuchi A."/>
            <person name="Ichimi K."/>
            <person name="Zhong B."/>
            <person name="Yan J."/>
            <person name="Zhu Y."/>
            <person name="Suga H."/>
            <person name="Watanabe Y."/>
            <person name="Ichiki-Uehara T."/>
            <person name="Shimizu T."/>
            <person name="Hagiwara K."/>
            <person name="Kamiunten H."/>
            <person name="Akutsu K."/>
            <person name="Omura T."/>
        </authorList>
    </citation>
    <scope>NUCLEOTIDE SEQUENCE [GENOMIC RNA]</scope>
</reference>
<feature type="chain" id="PRO_0000402399" description="Non-structural protein 4">
    <location>
        <begin position="1"/>
        <end position="725"/>
    </location>
</feature>
<feature type="region of interest" description="Disordered" evidence="1">
    <location>
        <begin position="1"/>
        <end position="26"/>
    </location>
</feature>
<feature type="region of interest" description="Disordered" evidence="1">
    <location>
        <begin position="666"/>
        <end position="725"/>
    </location>
</feature>
<feature type="compositionally biased region" description="Polar residues" evidence="1">
    <location>
        <begin position="7"/>
        <end position="16"/>
    </location>
</feature>
<feature type="compositionally biased region" description="Basic and acidic residues" evidence="1">
    <location>
        <begin position="675"/>
        <end position="686"/>
    </location>
</feature>
<feature type="compositionally biased region" description="Acidic residues" evidence="1">
    <location>
        <begin position="687"/>
        <end position="709"/>
    </location>
</feature>
<proteinExistence type="predicted"/>
<name>NSP4_RGDV</name>
<organismHost>
    <name type="scientific">Nephotettix cincticeps</name>
    <name type="common">Green rice leafhopper</name>
    <name type="synonym">Selenocephalus cincticeps</name>
    <dbReference type="NCBI Taxonomy" id="94400"/>
</organismHost>
<organismHost>
    <name type="scientific">Oryza sativa</name>
    <name type="common">Rice</name>
    <dbReference type="NCBI Taxonomy" id="4530"/>
</organismHost>
<evidence type="ECO:0000256" key="1">
    <source>
        <dbReference type="SAM" id="MobiDB-lite"/>
    </source>
</evidence>
<keyword id="KW-1185">Reference proteome</keyword>